<accession>Q9HZS1</accession>
<organism>
    <name type="scientific">Pseudomonas aeruginosa (strain ATCC 15692 / DSM 22644 / CIP 104116 / JCM 14847 / LMG 12228 / 1C / PRS 101 / PAO1)</name>
    <dbReference type="NCBI Taxonomy" id="208964"/>
    <lineage>
        <taxon>Bacteria</taxon>
        <taxon>Pseudomonadati</taxon>
        <taxon>Pseudomonadota</taxon>
        <taxon>Gammaproteobacteria</taxon>
        <taxon>Pseudomonadales</taxon>
        <taxon>Pseudomonadaceae</taxon>
        <taxon>Pseudomonas</taxon>
    </lineage>
</organism>
<protein>
    <recommendedName>
        <fullName evidence="3">Histidine transport ATP-binding protein HisP</fullName>
        <ecNumber evidence="1">7.4.2.1</ecNumber>
    </recommendedName>
</protein>
<comment type="function">
    <text evidence="1">Part of the ABC transporter complex HisPMQJ involved in histidine transport. Shows ATPase activity. Responsible for energy coupling to the transport system.</text>
</comment>
<comment type="catalytic activity">
    <reaction evidence="1">
        <text>a polar amino acid(out) + ATP + H2O = a polar amino acid(in) + ADP + phosphate + H(+)</text>
        <dbReference type="Rhea" id="RHEA:14673"/>
        <dbReference type="ChEBI" id="CHEBI:15377"/>
        <dbReference type="ChEBI" id="CHEBI:15378"/>
        <dbReference type="ChEBI" id="CHEBI:30616"/>
        <dbReference type="ChEBI" id="CHEBI:43474"/>
        <dbReference type="ChEBI" id="CHEBI:62031"/>
        <dbReference type="ChEBI" id="CHEBI:456216"/>
        <dbReference type="EC" id="7.4.2.1"/>
    </reaction>
    <physiologicalReaction direction="left-to-right" evidence="1">
        <dbReference type="Rhea" id="RHEA:14674"/>
    </physiologicalReaction>
</comment>
<comment type="catalytic activity">
    <reaction evidence="1">
        <text>L-histidine(out) + ATP + H2O = L-histidine(in) + ADP + phosphate + H(+)</text>
        <dbReference type="Rhea" id="RHEA:29891"/>
        <dbReference type="ChEBI" id="CHEBI:15377"/>
        <dbReference type="ChEBI" id="CHEBI:15378"/>
        <dbReference type="ChEBI" id="CHEBI:30616"/>
        <dbReference type="ChEBI" id="CHEBI:43474"/>
        <dbReference type="ChEBI" id="CHEBI:57595"/>
        <dbReference type="ChEBI" id="CHEBI:456216"/>
    </reaction>
    <physiologicalReaction direction="left-to-right" evidence="1">
        <dbReference type="Rhea" id="RHEA:29892"/>
    </physiologicalReaction>
</comment>
<comment type="subunit">
    <text evidence="1">The HisPMQJ complex is composed of two ATP-binding proteins (HisP), two transmembrane proteins (HisM and HisQ) and a solute-binding protein (HisJ).</text>
</comment>
<comment type="subcellular location">
    <subcellularLocation>
        <location evidence="1">Cell inner membrane</location>
        <topology evidence="1">Peripheral membrane protein</topology>
    </subcellularLocation>
</comment>
<comment type="similarity">
    <text evidence="3">Belongs to the ABC transporter superfamily.</text>
</comment>
<keyword id="KW-0029">Amino-acid transport</keyword>
<keyword id="KW-0067">ATP-binding</keyword>
<keyword id="KW-0997">Cell inner membrane</keyword>
<keyword id="KW-1003">Cell membrane</keyword>
<keyword id="KW-0472">Membrane</keyword>
<keyword id="KW-0547">Nucleotide-binding</keyword>
<keyword id="KW-1185">Reference proteome</keyword>
<keyword id="KW-1278">Translocase</keyword>
<keyword id="KW-0813">Transport</keyword>
<dbReference type="EC" id="7.4.2.1" evidence="1"/>
<dbReference type="EMBL" id="AE004091">
    <property type="protein sequence ID" value="AAG06314.1"/>
    <property type="molecule type" value="Genomic_DNA"/>
</dbReference>
<dbReference type="PIR" id="D83281">
    <property type="entry name" value="D83281"/>
</dbReference>
<dbReference type="RefSeq" id="NP_251616.1">
    <property type="nucleotide sequence ID" value="NC_002516.2"/>
</dbReference>
<dbReference type="RefSeq" id="WP_003114012.1">
    <property type="nucleotide sequence ID" value="NZ_QZGE01000009.1"/>
</dbReference>
<dbReference type="SMR" id="Q9HZS1"/>
<dbReference type="STRING" id="208964.PA2926"/>
<dbReference type="PaxDb" id="208964-PA2926"/>
<dbReference type="GeneID" id="882578"/>
<dbReference type="KEGG" id="pae:PA2926"/>
<dbReference type="PATRIC" id="fig|208964.12.peg.3067"/>
<dbReference type="PseudoCAP" id="PA2926"/>
<dbReference type="HOGENOM" id="CLU_000604_1_22_6"/>
<dbReference type="InParanoid" id="Q9HZS1"/>
<dbReference type="OrthoDB" id="9802264at2"/>
<dbReference type="PhylomeDB" id="Q9HZS1"/>
<dbReference type="BioCyc" id="PAER208964:G1FZ6-2976-MONOMER"/>
<dbReference type="Proteomes" id="UP000002438">
    <property type="component" value="Chromosome"/>
</dbReference>
<dbReference type="GO" id="GO:0005886">
    <property type="term" value="C:plasma membrane"/>
    <property type="evidence" value="ECO:0007669"/>
    <property type="project" value="UniProtKB-SubCell"/>
</dbReference>
<dbReference type="GO" id="GO:0015424">
    <property type="term" value="F:ABC-type amino acid transporter activity"/>
    <property type="evidence" value="ECO:0007669"/>
    <property type="project" value="InterPro"/>
</dbReference>
<dbReference type="GO" id="GO:0005524">
    <property type="term" value="F:ATP binding"/>
    <property type="evidence" value="ECO:0007669"/>
    <property type="project" value="UniProtKB-KW"/>
</dbReference>
<dbReference type="GO" id="GO:0016887">
    <property type="term" value="F:ATP hydrolysis activity"/>
    <property type="evidence" value="ECO:0007669"/>
    <property type="project" value="InterPro"/>
</dbReference>
<dbReference type="FunFam" id="3.40.50.300:FF:000020">
    <property type="entry name" value="Amino acid ABC transporter ATP-binding component"/>
    <property type="match status" value="1"/>
</dbReference>
<dbReference type="Gene3D" id="3.40.50.300">
    <property type="entry name" value="P-loop containing nucleotide triphosphate hydrolases"/>
    <property type="match status" value="1"/>
</dbReference>
<dbReference type="InterPro" id="IPR003593">
    <property type="entry name" value="AAA+_ATPase"/>
</dbReference>
<dbReference type="InterPro" id="IPR030679">
    <property type="entry name" value="ABC_ATPase_HisP-typ"/>
</dbReference>
<dbReference type="InterPro" id="IPR003439">
    <property type="entry name" value="ABC_transporter-like_ATP-bd"/>
</dbReference>
<dbReference type="InterPro" id="IPR017871">
    <property type="entry name" value="ABC_transporter-like_CS"/>
</dbReference>
<dbReference type="InterPro" id="IPR050086">
    <property type="entry name" value="MetN_ABC_transporter-like"/>
</dbReference>
<dbReference type="InterPro" id="IPR027417">
    <property type="entry name" value="P-loop_NTPase"/>
</dbReference>
<dbReference type="PANTHER" id="PTHR43166">
    <property type="entry name" value="AMINO ACID IMPORT ATP-BINDING PROTEIN"/>
    <property type="match status" value="1"/>
</dbReference>
<dbReference type="PANTHER" id="PTHR43166:SF15">
    <property type="entry name" value="HISTIDINE TRANSPORT ATP-BINDING PROTEIN HISP"/>
    <property type="match status" value="1"/>
</dbReference>
<dbReference type="Pfam" id="PF00005">
    <property type="entry name" value="ABC_tran"/>
    <property type="match status" value="1"/>
</dbReference>
<dbReference type="PIRSF" id="PIRSF039085">
    <property type="entry name" value="ABC_ATPase_HisP"/>
    <property type="match status" value="1"/>
</dbReference>
<dbReference type="SMART" id="SM00382">
    <property type="entry name" value="AAA"/>
    <property type="match status" value="1"/>
</dbReference>
<dbReference type="SUPFAM" id="SSF52540">
    <property type="entry name" value="P-loop containing nucleoside triphosphate hydrolases"/>
    <property type="match status" value="1"/>
</dbReference>
<dbReference type="PROSITE" id="PS00211">
    <property type="entry name" value="ABC_TRANSPORTER_1"/>
    <property type="match status" value="1"/>
</dbReference>
<dbReference type="PROSITE" id="PS50893">
    <property type="entry name" value="ABC_TRANSPORTER_2"/>
    <property type="match status" value="1"/>
</dbReference>
<evidence type="ECO:0000250" key="1">
    <source>
        <dbReference type="UniProtKB" id="P02915"/>
    </source>
</evidence>
<evidence type="ECO:0000255" key="2">
    <source>
        <dbReference type="PROSITE-ProRule" id="PRU00434"/>
    </source>
</evidence>
<evidence type="ECO:0000305" key="3"/>
<reference key="1">
    <citation type="journal article" date="2000" name="Nature">
        <title>Complete genome sequence of Pseudomonas aeruginosa PAO1, an opportunistic pathogen.</title>
        <authorList>
            <person name="Stover C.K."/>
            <person name="Pham X.-Q.T."/>
            <person name="Erwin A.L."/>
            <person name="Mizoguchi S.D."/>
            <person name="Warrener P."/>
            <person name="Hickey M.J."/>
            <person name="Brinkman F.S.L."/>
            <person name="Hufnagle W.O."/>
            <person name="Kowalik D.J."/>
            <person name="Lagrou M."/>
            <person name="Garber R.L."/>
            <person name="Goltry L."/>
            <person name="Tolentino E."/>
            <person name="Westbrock-Wadman S."/>
            <person name="Yuan Y."/>
            <person name="Brody L.L."/>
            <person name="Coulter S.N."/>
            <person name="Folger K.R."/>
            <person name="Kas A."/>
            <person name="Larbig K."/>
            <person name="Lim R.M."/>
            <person name="Smith K.A."/>
            <person name="Spencer D.H."/>
            <person name="Wong G.K.-S."/>
            <person name="Wu Z."/>
            <person name="Paulsen I.T."/>
            <person name="Reizer J."/>
            <person name="Saier M.H. Jr."/>
            <person name="Hancock R.E.W."/>
            <person name="Lory S."/>
            <person name="Olson M.V."/>
        </authorList>
    </citation>
    <scope>NUCLEOTIDE SEQUENCE [LARGE SCALE GENOMIC DNA]</scope>
    <source>
        <strain>ATCC 15692 / DSM 22644 / CIP 104116 / JCM 14847 / LMG 12228 / 1C / PRS 101 / PAO1</strain>
    </source>
</reference>
<name>HISP_PSEAE</name>
<proteinExistence type="inferred from homology"/>
<sequence>MYSLQVEDIHKRYGSHEVLRGVSLRAGKGDVISIIGSSGSGKSTFLRCVNFLEKPCAGHIRVGDEELRTRPGALGELRAADPRQLQRIRSRLAMVFQHFNLWSHLTVLENVVECPVNVLRMNRDDAVARARHYLAKVGLAEKVERQYPCELSGGQQQRVAIARALAMEPQVMLFDEPTSALDPELVGEVLKVMQQLAEEGRTMVLVTHEMAFARQVSSHVIFLHQGVIEEEGTPDQVFGAPRSERLRQFLAGNLK</sequence>
<gene>
    <name type="primary">hisP</name>
    <name type="ordered locus">PA2926</name>
</gene>
<feature type="chain" id="PRO_0000287736" description="Histidine transport ATP-binding protein HisP">
    <location>
        <begin position="1"/>
        <end position="255"/>
    </location>
</feature>
<feature type="domain" description="ABC transporter" evidence="2">
    <location>
        <begin position="4"/>
        <end position="250"/>
    </location>
</feature>
<feature type="binding site" evidence="1">
    <location>
        <position position="38"/>
    </location>
    <ligand>
        <name>ATP</name>
        <dbReference type="ChEBI" id="CHEBI:30616"/>
    </ligand>
</feature>
<feature type="binding site" evidence="1">
    <location>
        <position position="39"/>
    </location>
    <ligand>
        <name>ATP</name>
        <dbReference type="ChEBI" id="CHEBI:30616"/>
    </ligand>
</feature>
<feature type="binding site" evidence="1">
    <location>
        <position position="41"/>
    </location>
    <ligand>
        <name>ATP</name>
        <dbReference type="ChEBI" id="CHEBI:30616"/>
    </ligand>
</feature>
<feature type="binding site" evidence="1">
    <location>
        <position position="42"/>
    </location>
    <ligand>
        <name>ATP</name>
        <dbReference type="ChEBI" id="CHEBI:30616"/>
    </ligand>
</feature>
<feature type="binding site" evidence="1">
    <location>
        <position position="43"/>
    </location>
    <ligand>
        <name>ATP</name>
        <dbReference type="ChEBI" id="CHEBI:30616"/>
    </ligand>
</feature>
<feature type="binding site" evidence="1">
    <location>
        <position position="44"/>
    </location>
    <ligand>
        <name>ATP</name>
        <dbReference type="ChEBI" id="CHEBI:30616"/>
    </ligand>
</feature>